<keyword id="KW-0046">Antibiotic resistance</keyword>
<keyword id="KW-1015">Disulfide bond</keyword>
<keyword id="KW-0378">Hydrolase</keyword>
<keyword id="KW-0732">Signal</keyword>
<keyword id="KW-0814">Transposable element</keyword>
<comment type="function">
    <text>Hydrolyzes carbenicillin. Methicillin and oxacillin are weakly hydrolyzed.</text>
</comment>
<comment type="catalytic activity">
    <reaction evidence="3">
        <text>a beta-lactam + H2O = a substituted beta-amino acid</text>
        <dbReference type="Rhea" id="RHEA:20401"/>
        <dbReference type="ChEBI" id="CHEBI:15377"/>
        <dbReference type="ChEBI" id="CHEBI:35627"/>
        <dbReference type="ChEBI" id="CHEBI:140347"/>
        <dbReference type="EC" id="3.5.2.6"/>
    </reaction>
</comment>
<comment type="miscellaneous">
    <text evidence="6">The class A beta-lactamase family has a specific amino-acid numbering system, sometimes called Ambler or ABL numbering and often misspelt as Amber. A multiple sequence alignment was used to derive a consensus sequence and then the consensus was numbered taking into account insertions and deletions. This allows use of identical numbers, e.g. for active site residues, despite differences in protein length. UniProt always uses natural numbering of residues, hence there appear to be differences in numbering between this entry and some papers.</text>
</comment>
<comment type="similarity">
    <text evidence="5">Belongs to the class-A beta-lactamase family.</text>
</comment>
<dbReference type="EC" id="3.5.2.6"/>
<dbReference type="EMBL" id="U14748">
    <property type="protein sequence ID" value="AAC09015.1"/>
    <property type="molecule type" value="Genomic_DNA"/>
</dbReference>
<dbReference type="RefSeq" id="WP_063857819.1">
    <property type="nucleotide sequence ID" value="NG_048688.1"/>
</dbReference>
<dbReference type="SMR" id="Q44056"/>
<dbReference type="CARD" id="ARO:3002481">
    <property type="molecule name" value="AER-1"/>
    <property type="mechanism identifier" value="ARO:0001004"/>
    <property type="mechanism name" value="antibiotic inactivation"/>
</dbReference>
<dbReference type="KEGG" id="ag:AAC09015"/>
<dbReference type="GO" id="GO:0008800">
    <property type="term" value="F:beta-lactamase activity"/>
    <property type="evidence" value="ECO:0007669"/>
    <property type="project" value="UniProtKB-EC"/>
</dbReference>
<dbReference type="GO" id="GO:0030655">
    <property type="term" value="P:beta-lactam antibiotic catabolic process"/>
    <property type="evidence" value="ECO:0007669"/>
    <property type="project" value="InterPro"/>
</dbReference>
<dbReference type="GO" id="GO:0046677">
    <property type="term" value="P:response to antibiotic"/>
    <property type="evidence" value="ECO:0007669"/>
    <property type="project" value="UniProtKB-KW"/>
</dbReference>
<dbReference type="Gene3D" id="3.40.710.10">
    <property type="entry name" value="DD-peptidase/beta-lactamase superfamily"/>
    <property type="match status" value="1"/>
</dbReference>
<dbReference type="InterPro" id="IPR012338">
    <property type="entry name" value="Beta-lactam/transpept-like"/>
</dbReference>
<dbReference type="InterPro" id="IPR045155">
    <property type="entry name" value="Beta-lactam_cat"/>
</dbReference>
<dbReference type="InterPro" id="IPR000871">
    <property type="entry name" value="Beta-lactam_class-A"/>
</dbReference>
<dbReference type="InterPro" id="IPR023650">
    <property type="entry name" value="Beta-lactam_class-A_AS"/>
</dbReference>
<dbReference type="NCBIfam" id="NF033103">
    <property type="entry name" value="bla_class_A"/>
    <property type="match status" value="1"/>
</dbReference>
<dbReference type="PANTHER" id="PTHR35333">
    <property type="entry name" value="BETA-LACTAMASE"/>
    <property type="match status" value="1"/>
</dbReference>
<dbReference type="PANTHER" id="PTHR35333:SF3">
    <property type="entry name" value="BETA-LACTAMASE-TYPE TRANSPEPTIDASE FOLD CONTAINING PROTEIN"/>
    <property type="match status" value="1"/>
</dbReference>
<dbReference type="Pfam" id="PF13354">
    <property type="entry name" value="Beta-lactamase2"/>
    <property type="match status" value="1"/>
</dbReference>
<dbReference type="PRINTS" id="PR00118">
    <property type="entry name" value="BLACTAMASEA"/>
</dbReference>
<dbReference type="SUPFAM" id="SSF56601">
    <property type="entry name" value="beta-lactamase/transpeptidase-like"/>
    <property type="match status" value="1"/>
</dbReference>
<dbReference type="PROSITE" id="PS00146">
    <property type="entry name" value="BETA_LACTAMASE_A"/>
    <property type="match status" value="1"/>
</dbReference>
<protein>
    <recommendedName>
        <fullName>Beta-lactamase AER-1</fullName>
        <ecNumber>3.5.2.6</ecNumber>
    </recommendedName>
    <alternativeName>
        <fullName>Penicillinase</fullName>
    </alternativeName>
</protein>
<name>BLA1_AERHY</name>
<evidence type="ECO:0000250" key="1"/>
<evidence type="ECO:0000255" key="2"/>
<evidence type="ECO:0000255" key="3">
    <source>
        <dbReference type="PROSITE-ProRule" id="PRU10101"/>
    </source>
</evidence>
<evidence type="ECO:0000256" key="4">
    <source>
        <dbReference type="SAM" id="MobiDB-lite"/>
    </source>
</evidence>
<evidence type="ECO:0000305" key="5"/>
<evidence type="ECO:0000305" key="6">
    <source>
    </source>
</evidence>
<reference key="1">
    <citation type="journal article" date="1998" name="Antimicrob. Agents Chemother.">
        <title>Structure of CARB-4 and AER-1 carbenicillin-hydrolyzing beta-lactamases.</title>
        <authorList>
            <person name="Sanschagrin F."/>
            <person name="Bejaoui N."/>
            <person name="Levesque R.C."/>
        </authorList>
    </citation>
    <scope>NUCLEOTIDE SEQUENCE [GENOMIC DNA]</scope>
    <source>
        <strain>VL7711</strain>
        <transposon>Omega7711</transposon>
    </source>
</reference>
<reference key="2">
    <citation type="journal article" date="1991" name="Biochem. J.">
        <title>A standard numbering scheme for the class A beta-lactamases.</title>
        <authorList>
            <person name="Ambler R.P."/>
            <person name="Coulson A.F."/>
            <person name="Frere J.M."/>
            <person name="Ghuysen J.M."/>
            <person name="Joris B."/>
            <person name="Forsman M."/>
            <person name="Levesque R.C."/>
            <person name="Tiraby G."/>
            <person name="Waley S.G."/>
        </authorList>
    </citation>
    <scope>AMINO ACID NUMBERING SCHEME</scope>
</reference>
<proteinExistence type="inferred from homology"/>
<accession>Q44056</accession>
<sequence>MYVLSVEKPTLRNKFAAGIGVVLVCVVASFIPTPVFALDTTKLIQAVQSEESALHARVGMTVFDSNTGTTWNYRGDERFPLNSTHKTFSCAALLAKVDGKSLSLGQSVSISKEMLVTYSPITEKSLSPETVTFGKICQAAVSYSDNTAANVVFDAIGGATGFNAYMRSIGDEETQLDRKEPELNEGTPGDVRDTTTPNAMVNSLRKILLGDALSASSRSQLTQWMLDDQVAGALLRASLPSDWKIADKTGAGGYGSRSIVAVIWPPSKQPLVVGIYITQTKASMQASNQAIARIGVVLKDTVAP</sequence>
<feature type="signal peptide" evidence="2">
    <location>
        <begin position="1"/>
        <end position="37"/>
    </location>
</feature>
<feature type="chain" id="PRO_0000017048" description="Beta-lactamase AER-1">
    <location>
        <begin position="38"/>
        <end position="304"/>
    </location>
</feature>
<feature type="region of interest" description="Disordered" evidence="4">
    <location>
        <begin position="173"/>
        <end position="195"/>
    </location>
</feature>
<feature type="active site" description="Acyl-ester intermediate" evidence="3">
    <location>
        <position position="83"/>
    </location>
</feature>
<feature type="binding site" evidence="1">
    <location>
        <begin position="248"/>
        <end position="250"/>
    </location>
    <ligand>
        <name>substrate</name>
    </ligand>
</feature>
<feature type="disulfide bond" evidence="2">
    <location>
        <begin position="90"/>
        <end position="137"/>
    </location>
</feature>
<organism>
    <name type="scientific">Aeromonas hydrophila</name>
    <dbReference type="NCBI Taxonomy" id="644"/>
    <lineage>
        <taxon>Bacteria</taxon>
        <taxon>Pseudomonadati</taxon>
        <taxon>Pseudomonadota</taxon>
        <taxon>Gammaproteobacteria</taxon>
        <taxon>Aeromonadales</taxon>
        <taxon>Aeromonadaceae</taxon>
        <taxon>Aeromonas</taxon>
    </lineage>
</organism>
<gene>
    <name type="primary">aer1</name>
</gene>